<feature type="chain" id="PRO_0000382381" description="Glutamate-1-semialdehyde 2,1-aminomutase 1">
    <location>
        <begin position="1"/>
        <end position="429"/>
    </location>
</feature>
<feature type="modified residue" description="N6-(pyridoxal phosphate)lysine" evidence="1">
    <location>
        <position position="267"/>
    </location>
</feature>
<gene>
    <name evidence="1" type="primary">hemL1</name>
    <name type="ordered locus">Sca_1273</name>
</gene>
<name>GSA1_STACT</name>
<keyword id="KW-0963">Cytoplasm</keyword>
<keyword id="KW-0413">Isomerase</keyword>
<keyword id="KW-0627">Porphyrin biosynthesis</keyword>
<keyword id="KW-0663">Pyridoxal phosphate</keyword>
<keyword id="KW-1185">Reference proteome</keyword>
<organism>
    <name type="scientific">Staphylococcus carnosus (strain TM300)</name>
    <dbReference type="NCBI Taxonomy" id="396513"/>
    <lineage>
        <taxon>Bacteria</taxon>
        <taxon>Bacillati</taxon>
        <taxon>Bacillota</taxon>
        <taxon>Bacilli</taxon>
        <taxon>Bacillales</taxon>
        <taxon>Staphylococcaceae</taxon>
        <taxon>Staphylococcus</taxon>
    </lineage>
</organism>
<sequence length="429" mass="46656">MGYEKSIEAYKKAEQLMPGGVNSPVRAFKSVDMPAIFMDHGKGSKIYDIDGNEYIDYVLSWGPLILGHENPQVIENLHKAVDKGTSFGASTLEEIKLAELVIDRVPSIEKVRMVSSGTEATQDTIRLARGYTGRDKIVKFEGCYHGHSDSLLIKAGSGVATLGLPDSPGVPEGTAKSTITVPYNDLDAIRKAFELYGDDIAGVIVEPVAGNMGVVPPVEGFLQGLRDITNEYGSLLIFDEVMTGFRVGYNCAQGYFDVIPDLTCLGKVIGGGLPVGAFGGKKEIMDEIAPVGTIYQAGTLSGNPLAMTSGYETLSQLTPESYEYFNELGDMLEDGLKKVAAKHNVPMTVNRAGSMIGYFLNDGPVTNFEQANKSDLKLFSEMYREMAKEGVFLPPSQFEGTFLSTAHTKEDIERTIEAFDKTFERITNK</sequence>
<proteinExistence type="inferred from homology"/>
<dbReference type="EC" id="5.4.3.8" evidence="1"/>
<dbReference type="EMBL" id="AM295250">
    <property type="protein sequence ID" value="CAL28179.1"/>
    <property type="molecule type" value="Genomic_DNA"/>
</dbReference>
<dbReference type="RefSeq" id="WP_015900519.1">
    <property type="nucleotide sequence ID" value="NC_012121.1"/>
</dbReference>
<dbReference type="SMR" id="B9DND8"/>
<dbReference type="GeneID" id="93793697"/>
<dbReference type="KEGG" id="sca:SCA_1273"/>
<dbReference type="eggNOG" id="COG0001">
    <property type="taxonomic scope" value="Bacteria"/>
</dbReference>
<dbReference type="HOGENOM" id="CLU_016922_1_5_9"/>
<dbReference type="OrthoDB" id="9807885at2"/>
<dbReference type="BioCyc" id="SCAR396513:SCA_RS06350-MONOMER"/>
<dbReference type="UniPathway" id="UPA00251">
    <property type="reaction ID" value="UER00317"/>
</dbReference>
<dbReference type="Proteomes" id="UP000000444">
    <property type="component" value="Chromosome"/>
</dbReference>
<dbReference type="GO" id="GO:0005737">
    <property type="term" value="C:cytoplasm"/>
    <property type="evidence" value="ECO:0007669"/>
    <property type="project" value="UniProtKB-SubCell"/>
</dbReference>
<dbReference type="GO" id="GO:0042286">
    <property type="term" value="F:glutamate-1-semialdehyde 2,1-aminomutase activity"/>
    <property type="evidence" value="ECO:0007669"/>
    <property type="project" value="UniProtKB-UniRule"/>
</dbReference>
<dbReference type="GO" id="GO:0030170">
    <property type="term" value="F:pyridoxal phosphate binding"/>
    <property type="evidence" value="ECO:0007669"/>
    <property type="project" value="InterPro"/>
</dbReference>
<dbReference type="GO" id="GO:0008483">
    <property type="term" value="F:transaminase activity"/>
    <property type="evidence" value="ECO:0007669"/>
    <property type="project" value="InterPro"/>
</dbReference>
<dbReference type="GO" id="GO:0006782">
    <property type="term" value="P:protoporphyrinogen IX biosynthetic process"/>
    <property type="evidence" value="ECO:0007669"/>
    <property type="project" value="UniProtKB-UniRule"/>
</dbReference>
<dbReference type="CDD" id="cd00610">
    <property type="entry name" value="OAT_like"/>
    <property type="match status" value="1"/>
</dbReference>
<dbReference type="FunFam" id="3.40.640.10:FF:000021">
    <property type="entry name" value="Glutamate-1-semialdehyde 2,1-aminomutase"/>
    <property type="match status" value="1"/>
</dbReference>
<dbReference type="Gene3D" id="3.90.1150.10">
    <property type="entry name" value="Aspartate Aminotransferase, domain 1"/>
    <property type="match status" value="1"/>
</dbReference>
<dbReference type="Gene3D" id="3.40.640.10">
    <property type="entry name" value="Type I PLP-dependent aspartate aminotransferase-like (Major domain)"/>
    <property type="match status" value="1"/>
</dbReference>
<dbReference type="HAMAP" id="MF_00375">
    <property type="entry name" value="HemL_aminotrans_3"/>
    <property type="match status" value="1"/>
</dbReference>
<dbReference type="InterPro" id="IPR004639">
    <property type="entry name" value="4pyrrol_synth_GluAld_NH2Trfase"/>
</dbReference>
<dbReference type="InterPro" id="IPR005814">
    <property type="entry name" value="Aminotrans_3"/>
</dbReference>
<dbReference type="InterPro" id="IPR049704">
    <property type="entry name" value="Aminotrans_3_PPA_site"/>
</dbReference>
<dbReference type="InterPro" id="IPR015424">
    <property type="entry name" value="PyrdxlP-dep_Trfase"/>
</dbReference>
<dbReference type="InterPro" id="IPR015421">
    <property type="entry name" value="PyrdxlP-dep_Trfase_major"/>
</dbReference>
<dbReference type="InterPro" id="IPR015422">
    <property type="entry name" value="PyrdxlP-dep_Trfase_small"/>
</dbReference>
<dbReference type="NCBIfam" id="TIGR00713">
    <property type="entry name" value="hemL"/>
    <property type="match status" value="1"/>
</dbReference>
<dbReference type="NCBIfam" id="NF000818">
    <property type="entry name" value="PRK00062.1"/>
    <property type="match status" value="1"/>
</dbReference>
<dbReference type="PANTHER" id="PTHR43713">
    <property type="entry name" value="GLUTAMATE-1-SEMIALDEHYDE 2,1-AMINOMUTASE"/>
    <property type="match status" value="1"/>
</dbReference>
<dbReference type="PANTHER" id="PTHR43713:SF3">
    <property type="entry name" value="GLUTAMATE-1-SEMIALDEHYDE 2,1-AMINOMUTASE 1, CHLOROPLASTIC-RELATED"/>
    <property type="match status" value="1"/>
</dbReference>
<dbReference type="Pfam" id="PF00202">
    <property type="entry name" value="Aminotran_3"/>
    <property type="match status" value="1"/>
</dbReference>
<dbReference type="SUPFAM" id="SSF53383">
    <property type="entry name" value="PLP-dependent transferases"/>
    <property type="match status" value="1"/>
</dbReference>
<dbReference type="PROSITE" id="PS00600">
    <property type="entry name" value="AA_TRANSFER_CLASS_3"/>
    <property type="match status" value="1"/>
</dbReference>
<reference key="1">
    <citation type="journal article" date="2009" name="Appl. Environ. Microbiol.">
        <title>Genome analysis of the meat starter culture bacterium Staphylococcus carnosus TM300.</title>
        <authorList>
            <person name="Rosenstein R."/>
            <person name="Nerz C."/>
            <person name="Biswas L."/>
            <person name="Resch A."/>
            <person name="Raddatz G."/>
            <person name="Schuster S.C."/>
            <person name="Goetz F."/>
        </authorList>
    </citation>
    <scope>NUCLEOTIDE SEQUENCE [LARGE SCALE GENOMIC DNA]</scope>
    <source>
        <strain>TM300</strain>
    </source>
</reference>
<comment type="catalytic activity">
    <reaction evidence="1">
        <text>(S)-4-amino-5-oxopentanoate = 5-aminolevulinate</text>
        <dbReference type="Rhea" id="RHEA:14265"/>
        <dbReference type="ChEBI" id="CHEBI:57501"/>
        <dbReference type="ChEBI" id="CHEBI:356416"/>
        <dbReference type="EC" id="5.4.3.8"/>
    </reaction>
</comment>
<comment type="cofactor">
    <cofactor evidence="1">
        <name>pyridoxal 5'-phosphate</name>
        <dbReference type="ChEBI" id="CHEBI:597326"/>
    </cofactor>
</comment>
<comment type="pathway">
    <text evidence="1">Porphyrin-containing compound metabolism; protoporphyrin-IX biosynthesis; 5-aminolevulinate from L-glutamyl-tRNA(Glu): step 2/2.</text>
</comment>
<comment type="subunit">
    <text evidence="1">Homodimer.</text>
</comment>
<comment type="subcellular location">
    <subcellularLocation>
        <location evidence="1">Cytoplasm</location>
    </subcellularLocation>
</comment>
<comment type="similarity">
    <text evidence="1">Belongs to the class-III pyridoxal-phosphate-dependent aminotransferase family. HemL subfamily.</text>
</comment>
<evidence type="ECO:0000255" key="1">
    <source>
        <dbReference type="HAMAP-Rule" id="MF_00375"/>
    </source>
</evidence>
<protein>
    <recommendedName>
        <fullName evidence="1">Glutamate-1-semialdehyde 2,1-aminomutase 1</fullName>
        <shortName evidence="1">GSA 1</shortName>
        <ecNumber evidence="1">5.4.3.8</ecNumber>
    </recommendedName>
    <alternativeName>
        <fullName evidence="1">Glutamate-1-semialdehyde aminotransferase 1</fullName>
        <shortName evidence="1">GSA-AT 1</shortName>
    </alternativeName>
</protein>
<accession>B9DND8</accession>